<sequence length="428" mass="46389">MRYTKSEEAMKVAETLMPGGVNSPVRAFKSVDTPAIFMDHGKGSKIYDIDGNEYIDYVLSWGPLILGHRDPQVISHLHEAIDKGTSFGASTLLENKLAQLVIDRVPSIEKVRMVSSGTEATLDTLRLARGYTGRNKIVKFEGCYHGHSDSLLIKAGSGVATLGLPDSPGVPEGIAKNTITVPYNDLDALKIAFEKFGDDIAGVIVEPVAGNMGVVPPIEGFLQGLRDITTEYGALLIFDEVMTGFRVGYHCAQGYFGVTPDLTCLGKVIGGGLPVGAFGGKKEIMDHIAPLGNIYQAGTLSGNPLAMTSGYETLSQLTPETYEYFNMLGDILEDGLKRVFAKHNVPITVNRAGSMIGYFLNEGPVTNFEQANKSDLKLFAEMYREMAKEGVFLPPSQFEGTFLSTAHTKEDIEKTIQAFDTALSRIVK</sequence>
<feature type="chain" id="PRO_0000382372" description="Glutamate-1-semialdehyde 2,1-aminomutase 1">
    <location>
        <begin position="1"/>
        <end position="428"/>
    </location>
</feature>
<feature type="modified residue" description="N6-(pyridoxal phosphate)lysine" evidence="1">
    <location>
        <position position="267"/>
    </location>
</feature>
<keyword id="KW-0963">Cytoplasm</keyword>
<keyword id="KW-0413">Isomerase</keyword>
<keyword id="KW-0627">Porphyrin biosynthesis</keyword>
<keyword id="KW-0663">Pyridoxal phosphate</keyword>
<protein>
    <recommendedName>
        <fullName evidence="1">Glutamate-1-semialdehyde 2,1-aminomutase 1</fullName>
        <shortName evidence="1">GSA 1</shortName>
        <ecNumber evidence="1">5.4.3.8</ecNumber>
    </recommendedName>
    <alternativeName>
        <fullName evidence="1">Glutamate-1-semialdehyde aminotransferase 1</fullName>
        <shortName evidence="1">GSA-AT 1</shortName>
    </alternativeName>
</protein>
<reference key="1">
    <citation type="submission" date="2007-05" db="EMBL/GenBank/DDBJ databases">
        <title>Complete sequence of chromosome of Staphylococcus aureus subsp. aureus JH9.</title>
        <authorList>
            <consortium name="US DOE Joint Genome Institute"/>
            <person name="Copeland A."/>
            <person name="Lucas S."/>
            <person name="Lapidus A."/>
            <person name="Barry K."/>
            <person name="Detter J.C."/>
            <person name="Glavina del Rio T."/>
            <person name="Hammon N."/>
            <person name="Israni S."/>
            <person name="Pitluck S."/>
            <person name="Chain P."/>
            <person name="Malfatti S."/>
            <person name="Shin M."/>
            <person name="Vergez L."/>
            <person name="Schmutz J."/>
            <person name="Larimer F."/>
            <person name="Land M."/>
            <person name="Hauser L."/>
            <person name="Kyrpides N."/>
            <person name="Kim E."/>
            <person name="Tomasz A."/>
            <person name="Richardson P."/>
        </authorList>
    </citation>
    <scope>NUCLEOTIDE SEQUENCE [LARGE SCALE GENOMIC DNA]</scope>
    <source>
        <strain>JH9</strain>
    </source>
</reference>
<proteinExistence type="inferred from homology"/>
<gene>
    <name evidence="1" type="primary">hemL1</name>
    <name type="ordered locus">SaurJH9_1725</name>
</gene>
<accession>A5ITJ2</accession>
<organism>
    <name type="scientific">Staphylococcus aureus (strain JH9)</name>
    <dbReference type="NCBI Taxonomy" id="359786"/>
    <lineage>
        <taxon>Bacteria</taxon>
        <taxon>Bacillati</taxon>
        <taxon>Bacillota</taxon>
        <taxon>Bacilli</taxon>
        <taxon>Bacillales</taxon>
        <taxon>Staphylococcaceae</taxon>
        <taxon>Staphylococcus</taxon>
    </lineage>
</organism>
<dbReference type="EC" id="5.4.3.8" evidence="1"/>
<dbReference type="EMBL" id="CP000703">
    <property type="protein sequence ID" value="ABQ49515.1"/>
    <property type="molecule type" value="Genomic_DNA"/>
</dbReference>
<dbReference type="SMR" id="A5ITJ2"/>
<dbReference type="KEGG" id="saj:SaurJH9_1725"/>
<dbReference type="HOGENOM" id="CLU_016922_1_5_9"/>
<dbReference type="UniPathway" id="UPA00251">
    <property type="reaction ID" value="UER00317"/>
</dbReference>
<dbReference type="GO" id="GO:0005737">
    <property type="term" value="C:cytoplasm"/>
    <property type="evidence" value="ECO:0007669"/>
    <property type="project" value="UniProtKB-SubCell"/>
</dbReference>
<dbReference type="GO" id="GO:0042286">
    <property type="term" value="F:glutamate-1-semialdehyde 2,1-aminomutase activity"/>
    <property type="evidence" value="ECO:0007669"/>
    <property type="project" value="UniProtKB-UniRule"/>
</dbReference>
<dbReference type="GO" id="GO:0030170">
    <property type="term" value="F:pyridoxal phosphate binding"/>
    <property type="evidence" value="ECO:0007669"/>
    <property type="project" value="InterPro"/>
</dbReference>
<dbReference type="GO" id="GO:0008483">
    <property type="term" value="F:transaminase activity"/>
    <property type="evidence" value="ECO:0007669"/>
    <property type="project" value="InterPro"/>
</dbReference>
<dbReference type="GO" id="GO:0006782">
    <property type="term" value="P:protoporphyrinogen IX biosynthetic process"/>
    <property type="evidence" value="ECO:0007669"/>
    <property type="project" value="UniProtKB-UniRule"/>
</dbReference>
<dbReference type="CDD" id="cd00610">
    <property type="entry name" value="OAT_like"/>
    <property type="match status" value="1"/>
</dbReference>
<dbReference type="FunFam" id="3.40.640.10:FF:000021">
    <property type="entry name" value="Glutamate-1-semialdehyde 2,1-aminomutase"/>
    <property type="match status" value="1"/>
</dbReference>
<dbReference type="Gene3D" id="3.90.1150.10">
    <property type="entry name" value="Aspartate Aminotransferase, domain 1"/>
    <property type="match status" value="1"/>
</dbReference>
<dbReference type="Gene3D" id="3.40.640.10">
    <property type="entry name" value="Type I PLP-dependent aspartate aminotransferase-like (Major domain)"/>
    <property type="match status" value="1"/>
</dbReference>
<dbReference type="HAMAP" id="MF_00375">
    <property type="entry name" value="HemL_aminotrans_3"/>
    <property type="match status" value="1"/>
</dbReference>
<dbReference type="InterPro" id="IPR004639">
    <property type="entry name" value="4pyrrol_synth_GluAld_NH2Trfase"/>
</dbReference>
<dbReference type="InterPro" id="IPR005814">
    <property type="entry name" value="Aminotrans_3"/>
</dbReference>
<dbReference type="InterPro" id="IPR049704">
    <property type="entry name" value="Aminotrans_3_PPA_site"/>
</dbReference>
<dbReference type="InterPro" id="IPR015424">
    <property type="entry name" value="PyrdxlP-dep_Trfase"/>
</dbReference>
<dbReference type="InterPro" id="IPR015421">
    <property type="entry name" value="PyrdxlP-dep_Trfase_major"/>
</dbReference>
<dbReference type="InterPro" id="IPR015422">
    <property type="entry name" value="PyrdxlP-dep_Trfase_small"/>
</dbReference>
<dbReference type="NCBIfam" id="TIGR00713">
    <property type="entry name" value="hemL"/>
    <property type="match status" value="1"/>
</dbReference>
<dbReference type="NCBIfam" id="NF000818">
    <property type="entry name" value="PRK00062.1"/>
    <property type="match status" value="1"/>
</dbReference>
<dbReference type="PANTHER" id="PTHR43713">
    <property type="entry name" value="GLUTAMATE-1-SEMIALDEHYDE 2,1-AMINOMUTASE"/>
    <property type="match status" value="1"/>
</dbReference>
<dbReference type="PANTHER" id="PTHR43713:SF3">
    <property type="entry name" value="GLUTAMATE-1-SEMIALDEHYDE 2,1-AMINOMUTASE 1, CHLOROPLASTIC-RELATED"/>
    <property type="match status" value="1"/>
</dbReference>
<dbReference type="Pfam" id="PF00202">
    <property type="entry name" value="Aminotran_3"/>
    <property type="match status" value="1"/>
</dbReference>
<dbReference type="SUPFAM" id="SSF53383">
    <property type="entry name" value="PLP-dependent transferases"/>
    <property type="match status" value="1"/>
</dbReference>
<dbReference type="PROSITE" id="PS00600">
    <property type="entry name" value="AA_TRANSFER_CLASS_3"/>
    <property type="match status" value="1"/>
</dbReference>
<name>GSA1_STAA9</name>
<evidence type="ECO:0000255" key="1">
    <source>
        <dbReference type="HAMAP-Rule" id="MF_00375"/>
    </source>
</evidence>
<comment type="catalytic activity">
    <reaction evidence="1">
        <text>(S)-4-amino-5-oxopentanoate = 5-aminolevulinate</text>
        <dbReference type="Rhea" id="RHEA:14265"/>
        <dbReference type="ChEBI" id="CHEBI:57501"/>
        <dbReference type="ChEBI" id="CHEBI:356416"/>
        <dbReference type="EC" id="5.4.3.8"/>
    </reaction>
</comment>
<comment type="cofactor">
    <cofactor evidence="1">
        <name>pyridoxal 5'-phosphate</name>
        <dbReference type="ChEBI" id="CHEBI:597326"/>
    </cofactor>
</comment>
<comment type="pathway">
    <text evidence="1">Porphyrin-containing compound metabolism; protoporphyrin-IX biosynthesis; 5-aminolevulinate from L-glutamyl-tRNA(Glu): step 2/2.</text>
</comment>
<comment type="subunit">
    <text evidence="1">Homodimer.</text>
</comment>
<comment type="subcellular location">
    <subcellularLocation>
        <location evidence="1">Cytoplasm</location>
    </subcellularLocation>
</comment>
<comment type="similarity">
    <text evidence="1">Belongs to the class-III pyridoxal-phosphate-dependent aminotransferase family. HemL subfamily.</text>
</comment>